<evidence type="ECO:0000255" key="1">
    <source>
        <dbReference type="HAMAP-Rule" id="MF_01395"/>
    </source>
</evidence>
<evidence type="ECO:0000255" key="2">
    <source>
        <dbReference type="PROSITE-ProRule" id="PRU01136"/>
    </source>
</evidence>
<sequence length="304" mass="33274">MSWIERILNKSNITQTRKASIPEGVWTKCDSCGQVLYRAELERNLEVCPKCDHHMRMSARARLHMLLDAGSEVELGSELEPKDILKFRDSKKYKDRISAAQKDTGEKDALVAMKGTLQGMPIVAASFEFAFMGGSMASVVGARFVRAVEQALEDNCPLVCFSSSGGARMQEALMSLMQMAKTSAALAKMQERGLPYISVLTDPTMGGVSASLAMLGDINIAEPKALIGFAGPRVIEQTVREKLPPGFQRSEFLIEKGAIDMIVRRPVMRQTLASILSKLTHQPQPSVVESKADTVAQPENQADV</sequence>
<feature type="chain" id="PRO_0000359110" description="Acetyl-coenzyme A carboxylase carboxyl transferase subunit beta">
    <location>
        <begin position="1"/>
        <end position="304"/>
    </location>
</feature>
<feature type="domain" description="CoA carboxyltransferase N-terminal" evidence="2">
    <location>
        <begin position="25"/>
        <end position="294"/>
    </location>
</feature>
<feature type="zinc finger region" description="C4-type" evidence="1">
    <location>
        <begin position="29"/>
        <end position="51"/>
    </location>
</feature>
<feature type="binding site" evidence="1">
    <location>
        <position position="29"/>
    </location>
    <ligand>
        <name>Zn(2+)</name>
        <dbReference type="ChEBI" id="CHEBI:29105"/>
    </ligand>
</feature>
<feature type="binding site" evidence="1">
    <location>
        <position position="32"/>
    </location>
    <ligand>
        <name>Zn(2+)</name>
        <dbReference type="ChEBI" id="CHEBI:29105"/>
    </ligand>
</feature>
<feature type="binding site" evidence="1">
    <location>
        <position position="48"/>
    </location>
    <ligand>
        <name>Zn(2+)</name>
        <dbReference type="ChEBI" id="CHEBI:29105"/>
    </ligand>
</feature>
<feature type="binding site" evidence="1">
    <location>
        <position position="51"/>
    </location>
    <ligand>
        <name>Zn(2+)</name>
        <dbReference type="ChEBI" id="CHEBI:29105"/>
    </ligand>
</feature>
<dbReference type="EC" id="2.1.3.15" evidence="1"/>
<dbReference type="EMBL" id="CP001048">
    <property type="protein sequence ID" value="ACC89671.1"/>
    <property type="molecule type" value="Genomic_DNA"/>
</dbReference>
<dbReference type="RefSeq" id="WP_002209729.1">
    <property type="nucleotide sequence ID" value="NZ_CP009780.1"/>
</dbReference>
<dbReference type="SMR" id="B2K8H3"/>
<dbReference type="GeneID" id="57975921"/>
<dbReference type="KEGG" id="ypb:YPTS_2711"/>
<dbReference type="PATRIC" id="fig|502801.10.peg.2134"/>
<dbReference type="UniPathway" id="UPA00655">
    <property type="reaction ID" value="UER00711"/>
</dbReference>
<dbReference type="GO" id="GO:0009329">
    <property type="term" value="C:acetate CoA-transferase complex"/>
    <property type="evidence" value="ECO:0007669"/>
    <property type="project" value="TreeGrafter"/>
</dbReference>
<dbReference type="GO" id="GO:0003989">
    <property type="term" value="F:acetyl-CoA carboxylase activity"/>
    <property type="evidence" value="ECO:0007669"/>
    <property type="project" value="InterPro"/>
</dbReference>
<dbReference type="GO" id="GO:0005524">
    <property type="term" value="F:ATP binding"/>
    <property type="evidence" value="ECO:0007669"/>
    <property type="project" value="UniProtKB-KW"/>
</dbReference>
<dbReference type="GO" id="GO:0016743">
    <property type="term" value="F:carboxyl- or carbamoyltransferase activity"/>
    <property type="evidence" value="ECO:0007669"/>
    <property type="project" value="UniProtKB-UniRule"/>
</dbReference>
<dbReference type="GO" id="GO:0008270">
    <property type="term" value="F:zinc ion binding"/>
    <property type="evidence" value="ECO:0007669"/>
    <property type="project" value="UniProtKB-UniRule"/>
</dbReference>
<dbReference type="GO" id="GO:0006633">
    <property type="term" value="P:fatty acid biosynthetic process"/>
    <property type="evidence" value="ECO:0007669"/>
    <property type="project" value="UniProtKB-KW"/>
</dbReference>
<dbReference type="GO" id="GO:2001295">
    <property type="term" value="P:malonyl-CoA biosynthetic process"/>
    <property type="evidence" value="ECO:0007669"/>
    <property type="project" value="UniProtKB-UniRule"/>
</dbReference>
<dbReference type="FunFam" id="3.90.226.10:FF:000013">
    <property type="entry name" value="Acetyl-coenzyme A carboxylase carboxyl transferase subunit beta"/>
    <property type="match status" value="1"/>
</dbReference>
<dbReference type="Gene3D" id="3.90.226.10">
    <property type="entry name" value="2-enoyl-CoA Hydratase, Chain A, domain 1"/>
    <property type="match status" value="1"/>
</dbReference>
<dbReference type="HAMAP" id="MF_01395">
    <property type="entry name" value="AcetylCoA_CT_beta"/>
    <property type="match status" value="1"/>
</dbReference>
<dbReference type="InterPro" id="IPR034733">
    <property type="entry name" value="AcCoA_carboxyl_beta"/>
</dbReference>
<dbReference type="InterPro" id="IPR000438">
    <property type="entry name" value="Acetyl_CoA_COase_Trfase_b_su"/>
</dbReference>
<dbReference type="InterPro" id="IPR029045">
    <property type="entry name" value="ClpP/crotonase-like_dom_sf"/>
</dbReference>
<dbReference type="InterPro" id="IPR011762">
    <property type="entry name" value="COA_CT_N"/>
</dbReference>
<dbReference type="InterPro" id="IPR041010">
    <property type="entry name" value="Znf-ACC"/>
</dbReference>
<dbReference type="NCBIfam" id="TIGR00515">
    <property type="entry name" value="accD"/>
    <property type="match status" value="1"/>
</dbReference>
<dbReference type="PANTHER" id="PTHR42995">
    <property type="entry name" value="ACETYL-COENZYME A CARBOXYLASE CARBOXYL TRANSFERASE SUBUNIT BETA, CHLOROPLASTIC"/>
    <property type="match status" value="1"/>
</dbReference>
<dbReference type="PANTHER" id="PTHR42995:SF5">
    <property type="entry name" value="ACETYL-COENZYME A CARBOXYLASE CARBOXYL TRANSFERASE SUBUNIT BETA, CHLOROPLASTIC"/>
    <property type="match status" value="1"/>
</dbReference>
<dbReference type="Pfam" id="PF01039">
    <property type="entry name" value="Carboxyl_trans"/>
    <property type="match status" value="1"/>
</dbReference>
<dbReference type="Pfam" id="PF17848">
    <property type="entry name" value="Zn_ribbon_ACC"/>
    <property type="match status" value="1"/>
</dbReference>
<dbReference type="PRINTS" id="PR01070">
    <property type="entry name" value="ACCCTRFRASEB"/>
</dbReference>
<dbReference type="SUPFAM" id="SSF52096">
    <property type="entry name" value="ClpP/crotonase"/>
    <property type="match status" value="1"/>
</dbReference>
<dbReference type="PROSITE" id="PS50980">
    <property type="entry name" value="COA_CT_NTER"/>
    <property type="match status" value="1"/>
</dbReference>
<keyword id="KW-0067">ATP-binding</keyword>
<keyword id="KW-0963">Cytoplasm</keyword>
<keyword id="KW-0275">Fatty acid biosynthesis</keyword>
<keyword id="KW-0276">Fatty acid metabolism</keyword>
<keyword id="KW-0444">Lipid biosynthesis</keyword>
<keyword id="KW-0443">Lipid metabolism</keyword>
<keyword id="KW-0479">Metal-binding</keyword>
<keyword id="KW-0547">Nucleotide-binding</keyword>
<keyword id="KW-0808">Transferase</keyword>
<keyword id="KW-0862">Zinc</keyword>
<keyword id="KW-0863">Zinc-finger</keyword>
<comment type="function">
    <text evidence="1">Component of the acetyl coenzyme A carboxylase (ACC) complex. Biotin carboxylase (BC) catalyzes the carboxylation of biotin on its carrier protein (BCCP) and then the CO(2) group is transferred by the transcarboxylase to acetyl-CoA to form malonyl-CoA.</text>
</comment>
<comment type="catalytic activity">
    <reaction evidence="1">
        <text>N(6)-carboxybiotinyl-L-lysyl-[protein] + acetyl-CoA = N(6)-biotinyl-L-lysyl-[protein] + malonyl-CoA</text>
        <dbReference type="Rhea" id="RHEA:54728"/>
        <dbReference type="Rhea" id="RHEA-COMP:10505"/>
        <dbReference type="Rhea" id="RHEA-COMP:10506"/>
        <dbReference type="ChEBI" id="CHEBI:57288"/>
        <dbReference type="ChEBI" id="CHEBI:57384"/>
        <dbReference type="ChEBI" id="CHEBI:83144"/>
        <dbReference type="ChEBI" id="CHEBI:83145"/>
        <dbReference type="EC" id="2.1.3.15"/>
    </reaction>
</comment>
<comment type="cofactor">
    <cofactor evidence="1">
        <name>Zn(2+)</name>
        <dbReference type="ChEBI" id="CHEBI:29105"/>
    </cofactor>
    <text evidence="1">Binds 1 zinc ion per subunit.</text>
</comment>
<comment type="pathway">
    <text evidence="1">Lipid metabolism; malonyl-CoA biosynthesis; malonyl-CoA from acetyl-CoA: step 1/1.</text>
</comment>
<comment type="subunit">
    <text evidence="1">Acetyl-CoA carboxylase is a heterohexamer composed of biotin carboxyl carrier protein (AccB), biotin carboxylase (AccC) and two subunits each of ACCase subunit alpha (AccA) and ACCase subunit beta (AccD).</text>
</comment>
<comment type="subcellular location">
    <subcellularLocation>
        <location evidence="1">Cytoplasm</location>
    </subcellularLocation>
</comment>
<comment type="similarity">
    <text evidence="1">Belongs to the AccD/PCCB family.</text>
</comment>
<gene>
    <name evidence="1" type="primary">accD</name>
    <name type="ordered locus">YPTS_2711</name>
</gene>
<reference key="1">
    <citation type="submission" date="2008-04" db="EMBL/GenBank/DDBJ databases">
        <title>Complete sequence of Yersinia pseudotuberculosis PB1/+.</title>
        <authorList>
            <person name="Copeland A."/>
            <person name="Lucas S."/>
            <person name="Lapidus A."/>
            <person name="Glavina del Rio T."/>
            <person name="Dalin E."/>
            <person name="Tice H."/>
            <person name="Bruce D."/>
            <person name="Goodwin L."/>
            <person name="Pitluck S."/>
            <person name="Munk A.C."/>
            <person name="Brettin T."/>
            <person name="Detter J.C."/>
            <person name="Han C."/>
            <person name="Tapia R."/>
            <person name="Schmutz J."/>
            <person name="Larimer F."/>
            <person name="Land M."/>
            <person name="Hauser L."/>
            <person name="Challacombe J.F."/>
            <person name="Green L."/>
            <person name="Lindler L.E."/>
            <person name="Nikolich M.P."/>
            <person name="Richardson P."/>
        </authorList>
    </citation>
    <scope>NUCLEOTIDE SEQUENCE [LARGE SCALE GENOMIC DNA]</scope>
    <source>
        <strain>PB1/+</strain>
    </source>
</reference>
<organism>
    <name type="scientific">Yersinia pseudotuberculosis serotype IB (strain PB1/+)</name>
    <dbReference type="NCBI Taxonomy" id="502801"/>
    <lineage>
        <taxon>Bacteria</taxon>
        <taxon>Pseudomonadati</taxon>
        <taxon>Pseudomonadota</taxon>
        <taxon>Gammaproteobacteria</taxon>
        <taxon>Enterobacterales</taxon>
        <taxon>Yersiniaceae</taxon>
        <taxon>Yersinia</taxon>
    </lineage>
</organism>
<protein>
    <recommendedName>
        <fullName evidence="1">Acetyl-coenzyme A carboxylase carboxyl transferase subunit beta</fullName>
        <shortName evidence="1">ACCase subunit beta</shortName>
        <shortName evidence="1">Acetyl-CoA carboxylase carboxyltransferase subunit beta</shortName>
        <ecNumber evidence="1">2.1.3.15</ecNumber>
    </recommendedName>
</protein>
<accession>B2K8H3</accession>
<proteinExistence type="inferred from homology"/>
<name>ACCD_YERPB</name>